<gene>
    <name evidence="1" type="primary">ribH</name>
    <name type="ordered locus">YPDSF_2817</name>
</gene>
<name>RISB_YERPP</name>
<accession>A4TPG7</accession>
<reference key="1">
    <citation type="submission" date="2007-02" db="EMBL/GenBank/DDBJ databases">
        <title>Complete sequence of chromosome of Yersinia pestis Pestoides F.</title>
        <authorList>
            <consortium name="US DOE Joint Genome Institute"/>
            <person name="Copeland A."/>
            <person name="Lucas S."/>
            <person name="Lapidus A."/>
            <person name="Barry K."/>
            <person name="Detter J.C."/>
            <person name="Glavina del Rio T."/>
            <person name="Hammon N."/>
            <person name="Israni S."/>
            <person name="Dalin E."/>
            <person name="Tice H."/>
            <person name="Pitluck S."/>
            <person name="Di Bartolo G."/>
            <person name="Chain P."/>
            <person name="Malfatti S."/>
            <person name="Shin M."/>
            <person name="Vergez L."/>
            <person name="Schmutz J."/>
            <person name="Larimer F."/>
            <person name="Land M."/>
            <person name="Hauser L."/>
            <person name="Worsham P."/>
            <person name="Chu M."/>
            <person name="Bearden S."/>
            <person name="Garcia E."/>
            <person name="Richardson P."/>
        </authorList>
    </citation>
    <scope>NUCLEOTIDE SEQUENCE [LARGE SCALE GENOMIC DNA]</scope>
    <source>
        <strain>Pestoides F</strain>
    </source>
</reference>
<feature type="chain" id="PRO_1000040554" description="6,7-dimethyl-8-ribityllumazine synthase">
    <location>
        <begin position="1"/>
        <end position="156"/>
    </location>
</feature>
<feature type="active site" description="Proton donor" evidence="1">
    <location>
        <position position="89"/>
    </location>
</feature>
<feature type="binding site" evidence="1">
    <location>
        <position position="22"/>
    </location>
    <ligand>
        <name>5-amino-6-(D-ribitylamino)uracil</name>
        <dbReference type="ChEBI" id="CHEBI:15934"/>
    </ligand>
</feature>
<feature type="binding site" evidence="1">
    <location>
        <begin position="57"/>
        <end position="59"/>
    </location>
    <ligand>
        <name>5-amino-6-(D-ribitylamino)uracil</name>
        <dbReference type="ChEBI" id="CHEBI:15934"/>
    </ligand>
</feature>
<feature type="binding site" evidence="1">
    <location>
        <begin position="81"/>
        <end position="83"/>
    </location>
    <ligand>
        <name>5-amino-6-(D-ribitylamino)uracil</name>
        <dbReference type="ChEBI" id="CHEBI:15934"/>
    </ligand>
</feature>
<feature type="binding site" evidence="1">
    <location>
        <begin position="86"/>
        <end position="87"/>
    </location>
    <ligand>
        <name>(2S)-2-hydroxy-3-oxobutyl phosphate</name>
        <dbReference type="ChEBI" id="CHEBI:58830"/>
    </ligand>
</feature>
<feature type="binding site" evidence="1">
    <location>
        <position position="114"/>
    </location>
    <ligand>
        <name>5-amino-6-(D-ribitylamino)uracil</name>
        <dbReference type="ChEBI" id="CHEBI:15934"/>
    </ligand>
</feature>
<feature type="binding site" evidence="1">
    <location>
        <position position="128"/>
    </location>
    <ligand>
        <name>(2S)-2-hydroxy-3-oxobutyl phosphate</name>
        <dbReference type="ChEBI" id="CHEBI:58830"/>
    </ligand>
</feature>
<protein>
    <recommendedName>
        <fullName evidence="1">6,7-dimethyl-8-ribityllumazine synthase</fullName>
        <shortName evidence="1">DMRL synthase</shortName>
        <shortName evidence="1">LS</shortName>
        <shortName evidence="1">Lumazine synthase</shortName>
        <ecNumber evidence="1">2.5.1.78</ecNumber>
    </recommendedName>
</protein>
<keyword id="KW-0686">Riboflavin biosynthesis</keyword>
<keyword id="KW-0808">Transferase</keyword>
<evidence type="ECO:0000255" key="1">
    <source>
        <dbReference type="HAMAP-Rule" id="MF_00178"/>
    </source>
</evidence>
<comment type="function">
    <text evidence="1">Catalyzes the formation of 6,7-dimethyl-8-ribityllumazine by condensation of 5-amino-6-(D-ribitylamino)uracil with 3,4-dihydroxy-2-butanone 4-phosphate. This is the penultimate step in the biosynthesis of riboflavin.</text>
</comment>
<comment type="catalytic activity">
    <reaction evidence="1">
        <text>(2S)-2-hydroxy-3-oxobutyl phosphate + 5-amino-6-(D-ribitylamino)uracil = 6,7-dimethyl-8-(1-D-ribityl)lumazine + phosphate + 2 H2O + H(+)</text>
        <dbReference type="Rhea" id="RHEA:26152"/>
        <dbReference type="ChEBI" id="CHEBI:15377"/>
        <dbReference type="ChEBI" id="CHEBI:15378"/>
        <dbReference type="ChEBI" id="CHEBI:15934"/>
        <dbReference type="ChEBI" id="CHEBI:43474"/>
        <dbReference type="ChEBI" id="CHEBI:58201"/>
        <dbReference type="ChEBI" id="CHEBI:58830"/>
        <dbReference type="EC" id="2.5.1.78"/>
    </reaction>
</comment>
<comment type="pathway">
    <text evidence="1">Cofactor biosynthesis; riboflavin biosynthesis; riboflavin from 2-hydroxy-3-oxobutyl phosphate and 5-amino-6-(D-ribitylamino)uracil: step 1/2.</text>
</comment>
<comment type="subunit">
    <text evidence="1">Forms an icosahedral capsid composed of 60 subunits, arranged as a dodecamer of pentamers.</text>
</comment>
<comment type="similarity">
    <text evidence="1">Belongs to the DMRL synthase family.</text>
</comment>
<sequence>MNVIEGVVATPNARVAIAIARFNNFINDSLLDGAIDALKRIGQVSDDNITVVWVPGAYELPLVANVLAKTNRYDAVIALGTVIRGGTAHFEYVAGEASSGLSSVAMNSDIPVAFGVLTTESIEQAIERAGTKAGNKGAEAALTALEMINVIKAIKG</sequence>
<proteinExistence type="inferred from homology"/>
<dbReference type="EC" id="2.5.1.78" evidence="1"/>
<dbReference type="EMBL" id="CP000668">
    <property type="protein sequence ID" value="ABP41179.1"/>
    <property type="molecule type" value="Genomic_DNA"/>
</dbReference>
<dbReference type="SMR" id="A4TPG7"/>
<dbReference type="KEGG" id="ypp:YPDSF_2817"/>
<dbReference type="PATRIC" id="fig|386656.14.peg.75"/>
<dbReference type="UniPathway" id="UPA00275">
    <property type="reaction ID" value="UER00404"/>
</dbReference>
<dbReference type="GO" id="GO:0005829">
    <property type="term" value="C:cytosol"/>
    <property type="evidence" value="ECO:0007669"/>
    <property type="project" value="TreeGrafter"/>
</dbReference>
<dbReference type="GO" id="GO:0009349">
    <property type="term" value="C:riboflavin synthase complex"/>
    <property type="evidence" value="ECO:0007669"/>
    <property type="project" value="InterPro"/>
</dbReference>
<dbReference type="GO" id="GO:0000906">
    <property type="term" value="F:6,7-dimethyl-8-ribityllumazine synthase activity"/>
    <property type="evidence" value="ECO:0007669"/>
    <property type="project" value="UniProtKB-UniRule"/>
</dbReference>
<dbReference type="GO" id="GO:0009231">
    <property type="term" value="P:riboflavin biosynthetic process"/>
    <property type="evidence" value="ECO:0007669"/>
    <property type="project" value="UniProtKB-UniRule"/>
</dbReference>
<dbReference type="CDD" id="cd09209">
    <property type="entry name" value="Lumazine_synthase-I"/>
    <property type="match status" value="1"/>
</dbReference>
<dbReference type="FunFam" id="3.40.50.960:FF:000001">
    <property type="entry name" value="6,7-dimethyl-8-ribityllumazine synthase"/>
    <property type="match status" value="1"/>
</dbReference>
<dbReference type="Gene3D" id="3.40.50.960">
    <property type="entry name" value="Lumazine/riboflavin synthase"/>
    <property type="match status" value="1"/>
</dbReference>
<dbReference type="HAMAP" id="MF_00178">
    <property type="entry name" value="Lumazine_synth"/>
    <property type="match status" value="1"/>
</dbReference>
<dbReference type="InterPro" id="IPR034964">
    <property type="entry name" value="LS"/>
</dbReference>
<dbReference type="InterPro" id="IPR002180">
    <property type="entry name" value="LS/RS"/>
</dbReference>
<dbReference type="InterPro" id="IPR036467">
    <property type="entry name" value="LS/RS_sf"/>
</dbReference>
<dbReference type="NCBIfam" id="TIGR00114">
    <property type="entry name" value="lumazine-synth"/>
    <property type="match status" value="1"/>
</dbReference>
<dbReference type="NCBIfam" id="NF000812">
    <property type="entry name" value="PRK00061.1-4"/>
    <property type="match status" value="1"/>
</dbReference>
<dbReference type="PANTHER" id="PTHR21058:SF0">
    <property type="entry name" value="6,7-DIMETHYL-8-RIBITYLLUMAZINE SYNTHASE"/>
    <property type="match status" value="1"/>
</dbReference>
<dbReference type="PANTHER" id="PTHR21058">
    <property type="entry name" value="6,7-DIMETHYL-8-RIBITYLLUMAZINE SYNTHASE DMRL SYNTHASE LUMAZINE SYNTHASE"/>
    <property type="match status" value="1"/>
</dbReference>
<dbReference type="Pfam" id="PF00885">
    <property type="entry name" value="DMRL_synthase"/>
    <property type="match status" value="1"/>
</dbReference>
<dbReference type="SUPFAM" id="SSF52121">
    <property type="entry name" value="Lumazine synthase"/>
    <property type="match status" value="1"/>
</dbReference>
<organism>
    <name type="scientific">Yersinia pestis (strain Pestoides F)</name>
    <dbReference type="NCBI Taxonomy" id="386656"/>
    <lineage>
        <taxon>Bacteria</taxon>
        <taxon>Pseudomonadati</taxon>
        <taxon>Pseudomonadota</taxon>
        <taxon>Gammaproteobacteria</taxon>
        <taxon>Enterobacterales</taxon>
        <taxon>Yersiniaceae</taxon>
        <taxon>Yersinia</taxon>
    </lineage>
</organism>